<feature type="chain" id="PRO_1000012031" description="Polyamine aminopropyltransferase">
    <location>
        <begin position="1"/>
        <end position="285"/>
    </location>
</feature>
<feature type="domain" description="PABS" evidence="1">
    <location>
        <begin position="5"/>
        <end position="241"/>
    </location>
</feature>
<feature type="active site" description="Proton acceptor" evidence="1">
    <location>
        <position position="160"/>
    </location>
</feature>
<feature type="binding site" evidence="1">
    <location>
        <position position="35"/>
    </location>
    <ligand>
        <name>S-methyl-5'-thioadenosine</name>
        <dbReference type="ChEBI" id="CHEBI:17509"/>
    </ligand>
</feature>
<feature type="binding site" evidence="1">
    <location>
        <position position="66"/>
    </location>
    <ligand>
        <name>spermidine</name>
        <dbReference type="ChEBI" id="CHEBI:57834"/>
    </ligand>
</feature>
<feature type="binding site" evidence="1">
    <location>
        <position position="90"/>
    </location>
    <ligand>
        <name>spermidine</name>
        <dbReference type="ChEBI" id="CHEBI:57834"/>
    </ligand>
</feature>
<feature type="binding site" evidence="1">
    <location>
        <position position="110"/>
    </location>
    <ligand>
        <name>S-methyl-5'-thioadenosine</name>
        <dbReference type="ChEBI" id="CHEBI:17509"/>
    </ligand>
</feature>
<feature type="binding site" evidence="1">
    <location>
        <begin position="141"/>
        <end position="142"/>
    </location>
    <ligand>
        <name>S-methyl-5'-thioadenosine</name>
        <dbReference type="ChEBI" id="CHEBI:17509"/>
    </ligand>
</feature>
<feature type="binding site" evidence="1">
    <location>
        <begin position="160"/>
        <end position="163"/>
    </location>
    <ligand>
        <name>spermidine</name>
        <dbReference type="ChEBI" id="CHEBI:57834"/>
    </ligand>
</feature>
<feature type="binding site" evidence="1">
    <location>
        <position position="167"/>
    </location>
    <ligand>
        <name>S-methyl-5'-thioadenosine</name>
        <dbReference type="ChEBI" id="CHEBI:17509"/>
    </ligand>
</feature>
<keyword id="KW-0963">Cytoplasm</keyword>
<keyword id="KW-0620">Polyamine biosynthesis</keyword>
<keyword id="KW-0745">Spermidine biosynthesis</keyword>
<keyword id="KW-0808">Transferase</keyword>
<proteinExistence type="inferred from homology"/>
<comment type="function">
    <text evidence="1">Catalyzes the irreversible transfer of a propylamine group from the amino donor S-adenosylmethioninamine (decarboxy-AdoMet) to putrescine (1,4-diaminobutane) to yield spermidine.</text>
</comment>
<comment type="catalytic activity">
    <reaction evidence="1">
        <text>S-adenosyl 3-(methylsulfanyl)propylamine + putrescine = S-methyl-5'-thioadenosine + spermidine + H(+)</text>
        <dbReference type="Rhea" id="RHEA:12721"/>
        <dbReference type="ChEBI" id="CHEBI:15378"/>
        <dbReference type="ChEBI" id="CHEBI:17509"/>
        <dbReference type="ChEBI" id="CHEBI:57443"/>
        <dbReference type="ChEBI" id="CHEBI:57834"/>
        <dbReference type="ChEBI" id="CHEBI:326268"/>
        <dbReference type="EC" id="2.5.1.16"/>
    </reaction>
</comment>
<comment type="pathway">
    <text evidence="1">Amine and polyamine biosynthesis; spermidine biosynthesis; spermidine from putrescine: step 1/1.</text>
</comment>
<comment type="subunit">
    <text evidence="1">Homodimer or homotetramer.</text>
</comment>
<comment type="subcellular location">
    <subcellularLocation>
        <location evidence="1">Cytoplasm</location>
    </subcellularLocation>
</comment>
<comment type="similarity">
    <text evidence="1">Belongs to the spermidine/spermine synthase family.</text>
</comment>
<organism>
    <name type="scientific">Xanthomonas oryzae pv. oryzae (strain MAFF 311018)</name>
    <dbReference type="NCBI Taxonomy" id="342109"/>
    <lineage>
        <taxon>Bacteria</taxon>
        <taxon>Pseudomonadati</taxon>
        <taxon>Pseudomonadota</taxon>
        <taxon>Gammaproteobacteria</taxon>
        <taxon>Lysobacterales</taxon>
        <taxon>Lysobacteraceae</taxon>
        <taxon>Xanthomonas</taxon>
    </lineage>
</organism>
<name>SPEE_XANOM</name>
<protein>
    <recommendedName>
        <fullName evidence="1">Polyamine aminopropyltransferase</fullName>
    </recommendedName>
    <alternativeName>
        <fullName evidence="1">Putrescine aminopropyltransferase</fullName>
        <shortName evidence="1">PAPT</shortName>
    </alternativeName>
    <alternativeName>
        <fullName evidence="1">Spermidine synthase</fullName>
        <shortName evidence="1">SPDS</shortName>
        <shortName evidence="1">SPDSY</shortName>
        <ecNumber evidence="1">2.5.1.16</ecNumber>
    </alternativeName>
</protein>
<sequence length="285" mass="31568">MSTNDNWYIEHFQPTGSAIGFRISGKLDEVQSLFQKIEIYQTTDWGKLMLIDGAVMLTSRDNFFYHEMISHPALFTHPTPKRVVIIGGGDCGTLREVLKHPGVESATQCDIDEQVTRMSEKYFPELCDSNHDARAELLFDDGVAYMANCPAGSVDIVIVDSTDPVGPAEGLFNKAFYESCFKALKDDGLLVQQSESPLALLDLIKEMRTEMGKAGFQSFKTLPFPQPCYPTGWWSVTMASKQAKADFAFRQGAAQAKGFETLYYTAHLHTGVLVAPPFVAKALGE</sequence>
<gene>
    <name evidence="1" type="primary">speE</name>
    <name type="ordered locus">XOO0194</name>
</gene>
<reference key="1">
    <citation type="journal article" date="2005" name="Jpn. Agric. Res. Q.">
        <title>Genome sequence of Xanthomonas oryzae pv. oryzae suggests contribution of large numbers of effector genes and insertion sequences to its race diversity.</title>
        <authorList>
            <person name="Ochiai H."/>
            <person name="Inoue Y."/>
            <person name="Takeya M."/>
            <person name="Sasaki A."/>
            <person name="Kaku H."/>
        </authorList>
    </citation>
    <scope>NUCLEOTIDE SEQUENCE [LARGE SCALE GENOMIC DNA]</scope>
    <source>
        <strain>MAFF 311018</strain>
    </source>
</reference>
<accession>Q2P928</accession>
<dbReference type="EC" id="2.5.1.16" evidence="1"/>
<dbReference type="EMBL" id="AP008229">
    <property type="protein sequence ID" value="BAE66949.1"/>
    <property type="molecule type" value="Genomic_DNA"/>
</dbReference>
<dbReference type="RefSeq" id="WP_011257190.1">
    <property type="nucleotide sequence ID" value="NC_007705.1"/>
</dbReference>
<dbReference type="SMR" id="Q2P928"/>
<dbReference type="KEGG" id="xom:XOO0194"/>
<dbReference type="HOGENOM" id="CLU_048199_0_0_6"/>
<dbReference type="UniPathway" id="UPA00248">
    <property type="reaction ID" value="UER00314"/>
</dbReference>
<dbReference type="GO" id="GO:0005829">
    <property type="term" value="C:cytosol"/>
    <property type="evidence" value="ECO:0007669"/>
    <property type="project" value="TreeGrafter"/>
</dbReference>
<dbReference type="GO" id="GO:0004766">
    <property type="term" value="F:spermidine synthase activity"/>
    <property type="evidence" value="ECO:0007669"/>
    <property type="project" value="UniProtKB-UniRule"/>
</dbReference>
<dbReference type="GO" id="GO:0008295">
    <property type="term" value="P:spermidine biosynthetic process"/>
    <property type="evidence" value="ECO:0007669"/>
    <property type="project" value="UniProtKB-UniRule"/>
</dbReference>
<dbReference type="FunFam" id="3.40.50.150:FF:000290">
    <property type="entry name" value="Polyamine aminopropyltransferase"/>
    <property type="match status" value="1"/>
</dbReference>
<dbReference type="Gene3D" id="2.30.140.10">
    <property type="entry name" value="Spermidine synthase, tetramerisation domain"/>
    <property type="match status" value="1"/>
</dbReference>
<dbReference type="Gene3D" id="3.40.50.150">
    <property type="entry name" value="Vaccinia Virus protein VP39"/>
    <property type="match status" value="1"/>
</dbReference>
<dbReference type="HAMAP" id="MF_00198">
    <property type="entry name" value="Spermidine_synth"/>
    <property type="match status" value="1"/>
</dbReference>
<dbReference type="InterPro" id="IPR030374">
    <property type="entry name" value="PABS"/>
</dbReference>
<dbReference type="InterPro" id="IPR030373">
    <property type="entry name" value="PABS_CS"/>
</dbReference>
<dbReference type="InterPro" id="IPR029063">
    <property type="entry name" value="SAM-dependent_MTases_sf"/>
</dbReference>
<dbReference type="InterPro" id="IPR001045">
    <property type="entry name" value="Spermi_synthase"/>
</dbReference>
<dbReference type="InterPro" id="IPR035246">
    <property type="entry name" value="Spermidine_synt_N"/>
</dbReference>
<dbReference type="InterPro" id="IPR037163">
    <property type="entry name" value="Spermidine_synt_N_sf"/>
</dbReference>
<dbReference type="NCBIfam" id="NF002010">
    <property type="entry name" value="PRK00811.1"/>
    <property type="match status" value="1"/>
</dbReference>
<dbReference type="NCBIfam" id="TIGR00417">
    <property type="entry name" value="speE"/>
    <property type="match status" value="1"/>
</dbReference>
<dbReference type="PANTHER" id="PTHR11558:SF11">
    <property type="entry name" value="SPERMIDINE SYNTHASE"/>
    <property type="match status" value="1"/>
</dbReference>
<dbReference type="PANTHER" id="PTHR11558">
    <property type="entry name" value="SPERMIDINE/SPERMINE SYNTHASE"/>
    <property type="match status" value="1"/>
</dbReference>
<dbReference type="Pfam" id="PF17284">
    <property type="entry name" value="Spermine_synt_N"/>
    <property type="match status" value="1"/>
</dbReference>
<dbReference type="Pfam" id="PF01564">
    <property type="entry name" value="Spermine_synth"/>
    <property type="match status" value="1"/>
</dbReference>
<dbReference type="SUPFAM" id="SSF53335">
    <property type="entry name" value="S-adenosyl-L-methionine-dependent methyltransferases"/>
    <property type="match status" value="1"/>
</dbReference>
<dbReference type="PROSITE" id="PS01330">
    <property type="entry name" value="PABS_1"/>
    <property type="match status" value="1"/>
</dbReference>
<dbReference type="PROSITE" id="PS51006">
    <property type="entry name" value="PABS_2"/>
    <property type="match status" value="1"/>
</dbReference>
<evidence type="ECO:0000255" key="1">
    <source>
        <dbReference type="HAMAP-Rule" id="MF_00198"/>
    </source>
</evidence>